<protein>
    <recommendedName>
        <fullName evidence="1">Tryptophan synthase alpha chain</fullName>
        <ecNumber evidence="1">4.2.1.20</ecNumber>
    </recommendedName>
</protein>
<name>TRPA_SHEON</name>
<keyword id="KW-0028">Amino-acid biosynthesis</keyword>
<keyword id="KW-0057">Aromatic amino acid biosynthesis</keyword>
<keyword id="KW-0456">Lyase</keyword>
<keyword id="KW-1185">Reference proteome</keyword>
<keyword id="KW-0822">Tryptophan biosynthesis</keyword>
<gene>
    <name evidence="1" type="primary">trpA</name>
    <name type="ordered locus">SO_3024</name>
</gene>
<feature type="chain" id="PRO_0000098840" description="Tryptophan synthase alpha chain">
    <location>
        <begin position="1"/>
        <end position="278"/>
    </location>
</feature>
<feature type="active site" description="Proton acceptor" evidence="1">
    <location>
        <position position="61"/>
    </location>
</feature>
<feature type="active site" description="Proton acceptor" evidence="1">
    <location>
        <position position="72"/>
    </location>
</feature>
<comment type="function">
    <text evidence="1">The alpha subunit is responsible for the aldol cleavage of indoleglycerol phosphate to indole and glyceraldehyde 3-phosphate.</text>
</comment>
<comment type="catalytic activity">
    <reaction evidence="1">
        <text>(1S,2R)-1-C-(indol-3-yl)glycerol 3-phosphate + L-serine = D-glyceraldehyde 3-phosphate + L-tryptophan + H2O</text>
        <dbReference type="Rhea" id="RHEA:10532"/>
        <dbReference type="ChEBI" id="CHEBI:15377"/>
        <dbReference type="ChEBI" id="CHEBI:33384"/>
        <dbReference type="ChEBI" id="CHEBI:57912"/>
        <dbReference type="ChEBI" id="CHEBI:58866"/>
        <dbReference type="ChEBI" id="CHEBI:59776"/>
        <dbReference type="EC" id="4.2.1.20"/>
    </reaction>
</comment>
<comment type="pathway">
    <text evidence="1">Amino-acid biosynthesis; L-tryptophan biosynthesis; L-tryptophan from chorismate: step 5/5.</text>
</comment>
<comment type="subunit">
    <text evidence="1">Tetramer of two alpha and two beta chains.</text>
</comment>
<comment type="similarity">
    <text evidence="1">Belongs to the TrpA family.</text>
</comment>
<dbReference type="EC" id="4.2.1.20" evidence="1"/>
<dbReference type="EMBL" id="AE014299">
    <property type="protein sequence ID" value="AAN56036.1"/>
    <property type="molecule type" value="Genomic_DNA"/>
</dbReference>
<dbReference type="RefSeq" id="NP_718592.1">
    <property type="nucleotide sequence ID" value="NC_004347.2"/>
</dbReference>
<dbReference type="RefSeq" id="WP_011072929.1">
    <property type="nucleotide sequence ID" value="NC_004347.2"/>
</dbReference>
<dbReference type="SMR" id="Q8ECU9"/>
<dbReference type="STRING" id="211586.SO_3024"/>
<dbReference type="PaxDb" id="211586-SO_3024"/>
<dbReference type="KEGG" id="son:SO_3024"/>
<dbReference type="PATRIC" id="fig|211586.12.peg.2919"/>
<dbReference type="eggNOG" id="COG0159">
    <property type="taxonomic scope" value="Bacteria"/>
</dbReference>
<dbReference type="HOGENOM" id="CLU_016734_0_4_6"/>
<dbReference type="OrthoDB" id="9804578at2"/>
<dbReference type="PhylomeDB" id="Q8ECU9"/>
<dbReference type="BioCyc" id="SONE211586:G1GMP-2798-MONOMER"/>
<dbReference type="UniPathway" id="UPA00035">
    <property type="reaction ID" value="UER00044"/>
</dbReference>
<dbReference type="Proteomes" id="UP000008186">
    <property type="component" value="Chromosome"/>
</dbReference>
<dbReference type="GO" id="GO:0005829">
    <property type="term" value="C:cytosol"/>
    <property type="evidence" value="ECO:0000318"/>
    <property type="project" value="GO_Central"/>
</dbReference>
<dbReference type="GO" id="GO:0004834">
    <property type="term" value="F:tryptophan synthase activity"/>
    <property type="evidence" value="ECO:0000318"/>
    <property type="project" value="GO_Central"/>
</dbReference>
<dbReference type="GO" id="GO:0000162">
    <property type="term" value="P:L-tryptophan biosynthetic process"/>
    <property type="evidence" value="ECO:0000318"/>
    <property type="project" value="GO_Central"/>
</dbReference>
<dbReference type="CDD" id="cd04724">
    <property type="entry name" value="Tryptophan_synthase_alpha"/>
    <property type="match status" value="1"/>
</dbReference>
<dbReference type="FunFam" id="3.20.20.70:FF:000037">
    <property type="entry name" value="Tryptophan synthase alpha chain"/>
    <property type="match status" value="1"/>
</dbReference>
<dbReference type="Gene3D" id="3.20.20.70">
    <property type="entry name" value="Aldolase class I"/>
    <property type="match status" value="1"/>
</dbReference>
<dbReference type="HAMAP" id="MF_00131">
    <property type="entry name" value="Trp_synth_alpha"/>
    <property type="match status" value="1"/>
</dbReference>
<dbReference type="InterPro" id="IPR013785">
    <property type="entry name" value="Aldolase_TIM"/>
</dbReference>
<dbReference type="InterPro" id="IPR011060">
    <property type="entry name" value="RibuloseP-bd_barrel"/>
</dbReference>
<dbReference type="InterPro" id="IPR018204">
    <property type="entry name" value="Trp_synthase_alpha_AS"/>
</dbReference>
<dbReference type="InterPro" id="IPR002028">
    <property type="entry name" value="Trp_synthase_suA"/>
</dbReference>
<dbReference type="NCBIfam" id="TIGR00262">
    <property type="entry name" value="trpA"/>
    <property type="match status" value="1"/>
</dbReference>
<dbReference type="PANTHER" id="PTHR43406:SF1">
    <property type="entry name" value="TRYPTOPHAN SYNTHASE ALPHA CHAIN, CHLOROPLASTIC"/>
    <property type="match status" value="1"/>
</dbReference>
<dbReference type="PANTHER" id="PTHR43406">
    <property type="entry name" value="TRYPTOPHAN SYNTHASE, ALPHA CHAIN"/>
    <property type="match status" value="1"/>
</dbReference>
<dbReference type="Pfam" id="PF00290">
    <property type="entry name" value="Trp_syntA"/>
    <property type="match status" value="1"/>
</dbReference>
<dbReference type="SUPFAM" id="SSF51366">
    <property type="entry name" value="Ribulose-phoshate binding barrel"/>
    <property type="match status" value="1"/>
</dbReference>
<dbReference type="PROSITE" id="PS00167">
    <property type="entry name" value="TRP_SYNTHASE_ALPHA"/>
    <property type="match status" value="1"/>
</dbReference>
<proteinExistence type="inferred from homology"/>
<sequence>MNSISNQTIPHQASRYQAAFSRLKAEGRGAFVPFVTLGDPSPELSLKIIDTLVQNGADALELGFPFSDPLADGPVIQGANLRALAAGTTPTACFELLAKIRAKYPELPIGLLLYANLVFANGIDAFYAKAQQAGVDSVLIADVPVEEAAPFIQAAKAHGIAPIFIAPPNADSDTLAKVSQSGEGYTYLLSRAGVTGADTKAGTPVEEILAKLQEFNAPPPLLGFGIAEPAQVSAAIKAGAAGAISGSAVVKIIETHQQDEVKLLAALGEFTRTMKAAT</sequence>
<evidence type="ECO:0000255" key="1">
    <source>
        <dbReference type="HAMAP-Rule" id="MF_00131"/>
    </source>
</evidence>
<reference key="1">
    <citation type="journal article" date="2002" name="Nat. Biotechnol.">
        <title>Genome sequence of the dissimilatory metal ion-reducing bacterium Shewanella oneidensis.</title>
        <authorList>
            <person name="Heidelberg J.F."/>
            <person name="Paulsen I.T."/>
            <person name="Nelson K.E."/>
            <person name="Gaidos E.J."/>
            <person name="Nelson W.C."/>
            <person name="Read T.D."/>
            <person name="Eisen J.A."/>
            <person name="Seshadri R."/>
            <person name="Ward N.L."/>
            <person name="Methe B.A."/>
            <person name="Clayton R.A."/>
            <person name="Meyer T."/>
            <person name="Tsapin A."/>
            <person name="Scott J."/>
            <person name="Beanan M.J."/>
            <person name="Brinkac L.M."/>
            <person name="Daugherty S.C."/>
            <person name="DeBoy R.T."/>
            <person name="Dodson R.J."/>
            <person name="Durkin A.S."/>
            <person name="Haft D.H."/>
            <person name="Kolonay J.F."/>
            <person name="Madupu R."/>
            <person name="Peterson J.D."/>
            <person name="Umayam L.A."/>
            <person name="White O."/>
            <person name="Wolf A.M."/>
            <person name="Vamathevan J.J."/>
            <person name="Weidman J.F."/>
            <person name="Impraim M."/>
            <person name="Lee K."/>
            <person name="Berry K.J."/>
            <person name="Lee C."/>
            <person name="Mueller J."/>
            <person name="Khouri H.M."/>
            <person name="Gill J."/>
            <person name="Utterback T.R."/>
            <person name="McDonald L.A."/>
            <person name="Feldblyum T.V."/>
            <person name="Smith H.O."/>
            <person name="Venter J.C."/>
            <person name="Nealson K.H."/>
            <person name="Fraser C.M."/>
        </authorList>
    </citation>
    <scope>NUCLEOTIDE SEQUENCE [LARGE SCALE GENOMIC DNA]</scope>
    <source>
        <strain>ATCC 700550 / JCM 31522 / CIP 106686 / LMG 19005 / NCIMB 14063 / MR-1</strain>
    </source>
</reference>
<organism>
    <name type="scientific">Shewanella oneidensis (strain ATCC 700550 / JCM 31522 / CIP 106686 / LMG 19005 / NCIMB 14063 / MR-1)</name>
    <dbReference type="NCBI Taxonomy" id="211586"/>
    <lineage>
        <taxon>Bacteria</taxon>
        <taxon>Pseudomonadati</taxon>
        <taxon>Pseudomonadota</taxon>
        <taxon>Gammaproteobacteria</taxon>
        <taxon>Alteromonadales</taxon>
        <taxon>Shewanellaceae</taxon>
        <taxon>Shewanella</taxon>
    </lineage>
</organism>
<accession>Q8ECU9</accession>